<accession>A6L9A0</accession>
<evidence type="ECO:0000255" key="1">
    <source>
        <dbReference type="HAMAP-Rule" id="MF_00082"/>
    </source>
</evidence>
<comment type="function">
    <text evidence="1">Catalyzes the ATP-dependent phosphorylation of N-acetyl-L-glutamate.</text>
</comment>
<comment type="catalytic activity">
    <reaction evidence="1">
        <text>N-acetyl-L-glutamate + ATP = N-acetyl-L-glutamyl 5-phosphate + ADP</text>
        <dbReference type="Rhea" id="RHEA:14629"/>
        <dbReference type="ChEBI" id="CHEBI:30616"/>
        <dbReference type="ChEBI" id="CHEBI:44337"/>
        <dbReference type="ChEBI" id="CHEBI:57936"/>
        <dbReference type="ChEBI" id="CHEBI:456216"/>
        <dbReference type="EC" id="2.7.2.8"/>
    </reaction>
</comment>
<comment type="pathway">
    <text evidence="1">Amino-acid biosynthesis; L-arginine biosynthesis; N(2)-acetyl-L-ornithine from L-glutamate: step 2/4.</text>
</comment>
<comment type="subcellular location">
    <subcellularLocation>
        <location evidence="1">Cytoplasm</location>
    </subcellularLocation>
</comment>
<comment type="similarity">
    <text evidence="1">Belongs to the acetylglutamate kinase family. ArgB subfamily.</text>
</comment>
<sequence length="255" mass="27462">MEKLVLIKVGGKIVEEEETLRQLLNDFAAIEGYKVLVHGGGRSATKLAAQLGIESKMVNGRRITDAETLKVVTMVYGGLVNKNIVAGLQALGVNALGLTGADMNLMRSDKRPVAEVDYGFVGDVKEVNADLLASLIHQGIVPVLAPLTHDKQGHMLNTNADTIAGEAAKALAKHFEVTLMFCFEKKGVLLDENDDESVIPEIDRIAFKGYVEQGIIQGGMIPKLENAYQAIDAGVKQVIITQASEIHQGKGTRVF</sequence>
<gene>
    <name evidence="1" type="primary">argB</name>
    <name type="ordered locus">BDI_0488</name>
</gene>
<dbReference type="EC" id="2.7.2.8" evidence="1"/>
<dbReference type="EMBL" id="CP000140">
    <property type="protein sequence ID" value="ABR42264.1"/>
    <property type="molecule type" value="Genomic_DNA"/>
</dbReference>
<dbReference type="RefSeq" id="WP_005855613.1">
    <property type="nucleotide sequence ID" value="NZ_LR215978.1"/>
</dbReference>
<dbReference type="SMR" id="A6L9A0"/>
<dbReference type="STRING" id="435591.BDI_0488"/>
<dbReference type="PaxDb" id="435591-BDI_0488"/>
<dbReference type="KEGG" id="pdi:BDI_0488"/>
<dbReference type="eggNOG" id="COG0548">
    <property type="taxonomic scope" value="Bacteria"/>
</dbReference>
<dbReference type="HOGENOM" id="CLU_053680_1_0_10"/>
<dbReference type="BioCyc" id="PDIS435591:G1G5A-503-MONOMER"/>
<dbReference type="UniPathway" id="UPA00068">
    <property type="reaction ID" value="UER00107"/>
</dbReference>
<dbReference type="Proteomes" id="UP000000566">
    <property type="component" value="Chromosome"/>
</dbReference>
<dbReference type="GO" id="GO:0005737">
    <property type="term" value="C:cytoplasm"/>
    <property type="evidence" value="ECO:0007669"/>
    <property type="project" value="UniProtKB-SubCell"/>
</dbReference>
<dbReference type="GO" id="GO:0003991">
    <property type="term" value="F:acetylglutamate kinase activity"/>
    <property type="evidence" value="ECO:0007669"/>
    <property type="project" value="UniProtKB-UniRule"/>
</dbReference>
<dbReference type="GO" id="GO:0005524">
    <property type="term" value="F:ATP binding"/>
    <property type="evidence" value="ECO:0007669"/>
    <property type="project" value="UniProtKB-UniRule"/>
</dbReference>
<dbReference type="GO" id="GO:0042450">
    <property type="term" value="P:arginine biosynthetic process via ornithine"/>
    <property type="evidence" value="ECO:0007669"/>
    <property type="project" value="UniProtKB-UniRule"/>
</dbReference>
<dbReference type="GO" id="GO:0006526">
    <property type="term" value="P:L-arginine biosynthetic process"/>
    <property type="evidence" value="ECO:0007669"/>
    <property type="project" value="UniProtKB-UniPathway"/>
</dbReference>
<dbReference type="CDD" id="cd04238">
    <property type="entry name" value="AAK_NAGK-like"/>
    <property type="match status" value="1"/>
</dbReference>
<dbReference type="Gene3D" id="3.40.1160.10">
    <property type="entry name" value="Acetylglutamate kinase-like"/>
    <property type="match status" value="1"/>
</dbReference>
<dbReference type="HAMAP" id="MF_00082">
    <property type="entry name" value="ArgB"/>
    <property type="match status" value="1"/>
</dbReference>
<dbReference type="InterPro" id="IPR036393">
    <property type="entry name" value="AceGlu_kinase-like_sf"/>
</dbReference>
<dbReference type="InterPro" id="IPR004662">
    <property type="entry name" value="AcgluKinase_fam"/>
</dbReference>
<dbReference type="InterPro" id="IPR037528">
    <property type="entry name" value="ArgB"/>
</dbReference>
<dbReference type="InterPro" id="IPR001048">
    <property type="entry name" value="Asp/Glu/Uridylate_kinase"/>
</dbReference>
<dbReference type="NCBIfam" id="TIGR00761">
    <property type="entry name" value="argB"/>
    <property type="match status" value="1"/>
</dbReference>
<dbReference type="PANTHER" id="PTHR23342">
    <property type="entry name" value="N-ACETYLGLUTAMATE SYNTHASE"/>
    <property type="match status" value="1"/>
</dbReference>
<dbReference type="PANTHER" id="PTHR23342:SF0">
    <property type="entry name" value="N-ACETYLGLUTAMATE SYNTHASE, MITOCHONDRIAL"/>
    <property type="match status" value="1"/>
</dbReference>
<dbReference type="Pfam" id="PF00696">
    <property type="entry name" value="AA_kinase"/>
    <property type="match status" value="1"/>
</dbReference>
<dbReference type="PIRSF" id="PIRSF000728">
    <property type="entry name" value="NAGK"/>
    <property type="match status" value="1"/>
</dbReference>
<dbReference type="SUPFAM" id="SSF53633">
    <property type="entry name" value="Carbamate kinase-like"/>
    <property type="match status" value="1"/>
</dbReference>
<keyword id="KW-0028">Amino-acid biosynthesis</keyword>
<keyword id="KW-0055">Arginine biosynthesis</keyword>
<keyword id="KW-0067">ATP-binding</keyword>
<keyword id="KW-0963">Cytoplasm</keyword>
<keyword id="KW-0418">Kinase</keyword>
<keyword id="KW-0547">Nucleotide-binding</keyword>
<keyword id="KW-1185">Reference proteome</keyword>
<keyword id="KW-0808">Transferase</keyword>
<name>ARGB_PARD8</name>
<reference key="1">
    <citation type="journal article" date="2007" name="PLoS Biol.">
        <title>Evolution of symbiotic bacteria in the distal human intestine.</title>
        <authorList>
            <person name="Xu J."/>
            <person name="Mahowald M.A."/>
            <person name="Ley R.E."/>
            <person name="Lozupone C.A."/>
            <person name="Hamady M."/>
            <person name="Martens E.C."/>
            <person name="Henrissat B."/>
            <person name="Coutinho P.M."/>
            <person name="Minx P."/>
            <person name="Latreille P."/>
            <person name="Cordum H."/>
            <person name="Van Brunt A."/>
            <person name="Kim K."/>
            <person name="Fulton R.S."/>
            <person name="Fulton L.A."/>
            <person name="Clifton S.W."/>
            <person name="Wilson R.K."/>
            <person name="Knight R.D."/>
            <person name="Gordon J.I."/>
        </authorList>
    </citation>
    <scope>NUCLEOTIDE SEQUENCE [LARGE SCALE GENOMIC DNA]</scope>
    <source>
        <strain>ATCC 8503 / DSM 20701 / CIP 104284 / JCM 5825 / NCTC 11152</strain>
    </source>
</reference>
<feature type="chain" id="PRO_0000335650" description="Acetylglutamate kinase">
    <location>
        <begin position="1"/>
        <end position="255"/>
    </location>
</feature>
<feature type="binding site" evidence="1">
    <location>
        <begin position="40"/>
        <end position="41"/>
    </location>
    <ligand>
        <name>substrate</name>
    </ligand>
</feature>
<feature type="binding site" evidence="1">
    <location>
        <position position="62"/>
    </location>
    <ligand>
        <name>substrate</name>
    </ligand>
</feature>
<feature type="binding site" evidence="1">
    <location>
        <position position="157"/>
    </location>
    <ligand>
        <name>substrate</name>
    </ligand>
</feature>
<feature type="site" description="Transition state stabilizer" evidence="1">
    <location>
        <position position="8"/>
    </location>
</feature>
<feature type="site" description="Transition state stabilizer" evidence="1">
    <location>
        <position position="223"/>
    </location>
</feature>
<organism>
    <name type="scientific">Parabacteroides distasonis (strain ATCC 8503 / DSM 20701 / CIP 104284 / JCM 5825 / NCTC 11152)</name>
    <dbReference type="NCBI Taxonomy" id="435591"/>
    <lineage>
        <taxon>Bacteria</taxon>
        <taxon>Pseudomonadati</taxon>
        <taxon>Bacteroidota</taxon>
        <taxon>Bacteroidia</taxon>
        <taxon>Bacteroidales</taxon>
        <taxon>Tannerellaceae</taxon>
        <taxon>Parabacteroides</taxon>
    </lineage>
</organism>
<protein>
    <recommendedName>
        <fullName evidence="1">Acetylglutamate kinase</fullName>
        <ecNumber evidence="1">2.7.2.8</ecNumber>
    </recommendedName>
    <alternativeName>
        <fullName evidence="1">N-acetyl-L-glutamate 5-phosphotransferase</fullName>
    </alternativeName>
    <alternativeName>
        <fullName evidence="1">NAG kinase</fullName>
        <shortName evidence="1">NAGK</shortName>
    </alternativeName>
</protein>
<proteinExistence type="inferred from homology"/>